<proteinExistence type="evidence at protein level"/>
<sequence>MATVQQLVGRWRLVESKGFDEYMKEVGVGMALRKVGAMAKPDCIITSDGKNLSIKTESTLKTTQFSCKLGEKFEETTADGRKTQTVCNFTDGALVQHQEWDGKESTITRKLEDGKLVVVCVMNNVTCTRVYEKVE</sequence>
<organism>
    <name type="scientific">Bos taurus</name>
    <name type="common">Bovine</name>
    <dbReference type="NCBI Taxonomy" id="9913"/>
    <lineage>
        <taxon>Eukaryota</taxon>
        <taxon>Metazoa</taxon>
        <taxon>Chordata</taxon>
        <taxon>Craniata</taxon>
        <taxon>Vertebrata</taxon>
        <taxon>Euteleostomi</taxon>
        <taxon>Mammalia</taxon>
        <taxon>Eutheria</taxon>
        <taxon>Laurasiatheria</taxon>
        <taxon>Artiodactyla</taxon>
        <taxon>Ruminantia</taxon>
        <taxon>Pecora</taxon>
        <taxon>Bovidae</taxon>
        <taxon>Bovinae</taxon>
        <taxon>Bos</taxon>
    </lineage>
</organism>
<accession>P55052</accession>
<accession>O62808</accession>
<accession>Q5E9D9</accession>
<protein>
    <recommendedName>
        <fullName evidence="5">Fatty acid-binding protein 5</fullName>
    </recommendedName>
    <alternativeName>
        <fullName>Differentiation-associated lipid-binding protein LP2</fullName>
    </alternativeName>
    <alternativeName>
        <fullName>Epidermal-type fatty acid-binding protein</fullName>
        <shortName>E-FABP</shortName>
    </alternativeName>
    <alternativeName>
        <fullName>Fatty acid-binding protein, epidermal</fullName>
    </alternativeName>
</protein>
<comment type="function">
    <text evidence="2 3">Intracellular carrier for long-chain fatty acids and related active lipids, such as endocannabinoids, that regulate the metabolism and actions of the ligands they bind. In addition to the cytosolic transport, selectively delivers specific fatty acids from the cytosol to the nucleus, wherein they activate nuclear receptors (By similarity). Delivers retinoic acid to the nuclear receptor peroxisome proliferator-activated receptor delta; which promotes proliferation and survival. May also serve as a synaptic carrier of endocannabinoid at central synapses and thus controls retrograde endocannabinoid signaling. Modulates inflammation by regulating PTGES induction via NF-kappa-B activation, and prostaglandin E2 (PGE2) biosynthesis during inflammation (By similarity).</text>
</comment>
<comment type="catalytic activity">
    <reaction evidence="2">
        <text>hexadecanoate(out) = hexadecanoate(in)</text>
        <dbReference type="Rhea" id="RHEA:45256"/>
        <dbReference type="ChEBI" id="CHEBI:7896"/>
    </reaction>
</comment>
<comment type="catalytic activity">
    <reaction evidence="2">
        <text>(9Z,12Z)-octadecadienoate(out) = (9Z,12Z)-octadecadienoate(in)</text>
        <dbReference type="Rhea" id="RHEA:45264"/>
        <dbReference type="ChEBI" id="CHEBI:30245"/>
    </reaction>
</comment>
<comment type="catalytic activity">
    <reaction evidence="2">
        <text>(9Z)-octadecenoate(out) = (9Z)-octadecenoate(in)</text>
        <dbReference type="Rhea" id="RHEA:33655"/>
        <dbReference type="ChEBI" id="CHEBI:30823"/>
    </reaction>
</comment>
<comment type="subunit">
    <text evidence="3">Monomer.</text>
</comment>
<comment type="subcellular location">
    <subcellularLocation>
        <location evidence="4">Cytoplasm</location>
    </subcellularLocation>
    <subcellularLocation>
        <location evidence="2">Nucleus</location>
    </subcellularLocation>
    <subcellularLocation>
        <location evidence="3">Synapse</location>
    </subcellularLocation>
    <subcellularLocation>
        <location evidence="3">Postsynaptic density</location>
    </subcellularLocation>
    <subcellularLocation>
        <location evidence="3">Secreted</location>
    </subcellularLocation>
    <text evidence="2 3">Localizes primarily to the cytoplasm. Upon certain ligand binding, a conformation change exposes a nuclear localization motif and the protein is transported into nucleus (By similarity). Secreted by astrocytes, but not by neurons (By similarity).</text>
</comment>
<comment type="tissue specificity">
    <text evidence="4">Most abundant in lens and retina (found in the mueller cells), moderately abundant in heart and testis (found in the Sertoli cells), and present in very low amounts in lung.</text>
</comment>
<comment type="domain">
    <text evidence="1">Forms a beta-barrel structure that accommodates hydrophobic ligands in its interior.</text>
</comment>
<comment type="similarity">
    <text evidence="5">Belongs to the calycin superfamily. Fatty-acid binding protein (FABP) family.</text>
</comment>
<evidence type="ECO:0000250" key="1"/>
<evidence type="ECO:0000250" key="2">
    <source>
        <dbReference type="UniProtKB" id="Q01469"/>
    </source>
</evidence>
<evidence type="ECO:0000250" key="3">
    <source>
        <dbReference type="UniProtKB" id="Q05816"/>
    </source>
</evidence>
<evidence type="ECO:0000269" key="4">
    <source>
    </source>
</evidence>
<evidence type="ECO:0000305" key="5"/>
<gene>
    <name type="primary">FABP5</name>
</gene>
<dbReference type="EMBL" id="U55188">
    <property type="protein sequence ID" value="AAB41297.1"/>
    <property type="molecule type" value="mRNA"/>
</dbReference>
<dbReference type="EMBL" id="AF059507">
    <property type="protein sequence ID" value="AAC14711.1"/>
    <property type="molecule type" value="mRNA"/>
</dbReference>
<dbReference type="EMBL" id="BT020981">
    <property type="protein sequence ID" value="AAX08998.1"/>
    <property type="molecule type" value="mRNA"/>
</dbReference>
<dbReference type="EMBL" id="BC105196">
    <property type="protein sequence ID" value="AAI05197.1"/>
    <property type="molecule type" value="mRNA"/>
</dbReference>
<dbReference type="RefSeq" id="NP_776740.1">
    <property type="nucleotide sequence ID" value="NM_174315.3"/>
</dbReference>
<dbReference type="SMR" id="P55052"/>
<dbReference type="FunCoup" id="P55052">
    <property type="interactions" value="387"/>
</dbReference>
<dbReference type="STRING" id="9913.ENSBTAP00000055977"/>
<dbReference type="PeptideAtlas" id="P55052"/>
<dbReference type="Ensembl" id="ENSBTAT00000065769.2">
    <property type="protein sequence ID" value="ENSBTAP00000055977.2"/>
    <property type="gene ID" value="ENSBTAG00000047330.2"/>
</dbReference>
<dbReference type="GeneID" id="281760"/>
<dbReference type="KEGG" id="bta:281760"/>
<dbReference type="CTD" id="2171"/>
<dbReference type="VEuPathDB" id="HostDB:ENSBTAG00000047330"/>
<dbReference type="GeneTree" id="ENSGT00940000154530"/>
<dbReference type="InParanoid" id="P55052"/>
<dbReference type="OMA" id="KMGNMAK"/>
<dbReference type="OrthoDB" id="412780at2759"/>
<dbReference type="Reactome" id="R-BTA-163560">
    <property type="pathway name" value="Triglyceride catabolism"/>
</dbReference>
<dbReference type="Reactome" id="R-BTA-5362517">
    <property type="pathway name" value="Signaling by Retinoic Acid"/>
</dbReference>
<dbReference type="Reactome" id="R-BTA-6798695">
    <property type="pathway name" value="Neutrophil degranulation"/>
</dbReference>
<dbReference type="Proteomes" id="UP000009136">
    <property type="component" value="Chromosome 14"/>
</dbReference>
<dbReference type="Bgee" id="ENSBTAG00000047330">
    <property type="expression patterns" value="Expressed in esophagus and 103 other cell types or tissues"/>
</dbReference>
<dbReference type="GO" id="GO:0005737">
    <property type="term" value="C:cytoplasm"/>
    <property type="evidence" value="ECO:0000314"/>
    <property type="project" value="UniProtKB"/>
</dbReference>
<dbReference type="GO" id="GO:0005829">
    <property type="term" value="C:cytosol"/>
    <property type="evidence" value="ECO:0000318"/>
    <property type="project" value="GO_Central"/>
</dbReference>
<dbReference type="GO" id="GO:0005615">
    <property type="term" value="C:extracellular space"/>
    <property type="evidence" value="ECO:0000250"/>
    <property type="project" value="UniProtKB"/>
</dbReference>
<dbReference type="GO" id="GO:0098978">
    <property type="term" value="C:glutamatergic synapse"/>
    <property type="evidence" value="ECO:0007669"/>
    <property type="project" value="Ensembl"/>
</dbReference>
<dbReference type="GO" id="GO:0005634">
    <property type="term" value="C:nucleus"/>
    <property type="evidence" value="ECO:0000318"/>
    <property type="project" value="GO_Central"/>
</dbReference>
<dbReference type="GO" id="GO:0099524">
    <property type="term" value="C:postsynaptic cytosol"/>
    <property type="evidence" value="ECO:0007669"/>
    <property type="project" value="Ensembl"/>
</dbReference>
<dbReference type="GO" id="GO:0014069">
    <property type="term" value="C:postsynaptic density"/>
    <property type="evidence" value="ECO:0000250"/>
    <property type="project" value="UniProtKB"/>
</dbReference>
<dbReference type="GO" id="GO:0099092">
    <property type="term" value="C:postsynaptic density, intracellular component"/>
    <property type="evidence" value="ECO:0007669"/>
    <property type="project" value="Ensembl"/>
</dbReference>
<dbReference type="GO" id="GO:0045202">
    <property type="term" value="C:synapse"/>
    <property type="evidence" value="ECO:0000250"/>
    <property type="project" value="UniProtKB"/>
</dbReference>
<dbReference type="GO" id="GO:0005504">
    <property type="term" value="F:fatty acid binding"/>
    <property type="evidence" value="ECO:0000318"/>
    <property type="project" value="GO_Central"/>
</dbReference>
<dbReference type="GO" id="GO:0042802">
    <property type="term" value="F:identical protein binding"/>
    <property type="evidence" value="ECO:0007669"/>
    <property type="project" value="Ensembl"/>
</dbReference>
<dbReference type="GO" id="GO:0005324">
    <property type="term" value="F:long-chain fatty acid transmembrane transporter activity"/>
    <property type="evidence" value="ECO:0007669"/>
    <property type="project" value="Ensembl"/>
</dbReference>
<dbReference type="GO" id="GO:0001972">
    <property type="term" value="F:retinoic acid binding"/>
    <property type="evidence" value="ECO:0007669"/>
    <property type="project" value="Ensembl"/>
</dbReference>
<dbReference type="GO" id="GO:0015908">
    <property type="term" value="P:fatty acid transport"/>
    <property type="evidence" value="ECO:0000318"/>
    <property type="project" value="GO_Central"/>
</dbReference>
<dbReference type="GO" id="GO:0042593">
    <property type="term" value="P:glucose homeostasis"/>
    <property type="evidence" value="ECO:0007669"/>
    <property type="project" value="Ensembl"/>
</dbReference>
<dbReference type="GO" id="GO:0006006">
    <property type="term" value="P:glucose metabolic process"/>
    <property type="evidence" value="ECO:0007669"/>
    <property type="project" value="Ensembl"/>
</dbReference>
<dbReference type="GO" id="GO:1990379">
    <property type="term" value="P:lipid transport across blood-brain barrier"/>
    <property type="evidence" value="ECO:0007669"/>
    <property type="project" value="Ensembl"/>
</dbReference>
<dbReference type="GO" id="GO:0010829">
    <property type="term" value="P:negative regulation of D-glucose transmembrane transport"/>
    <property type="evidence" value="ECO:0007669"/>
    <property type="project" value="Ensembl"/>
</dbReference>
<dbReference type="GO" id="GO:0006656">
    <property type="term" value="P:phosphatidylcholine biosynthetic process"/>
    <property type="evidence" value="ECO:0007669"/>
    <property type="project" value="Ensembl"/>
</dbReference>
<dbReference type="GO" id="GO:0120162">
    <property type="term" value="P:positive regulation of cold-induced thermogenesis"/>
    <property type="evidence" value="ECO:0007669"/>
    <property type="project" value="Ensembl"/>
</dbReference>
<dbReference type="GO" id="GO:0035360">
    <property type="term" value="P:positive regulation of peroxisome proliferator activated receptor signaling pathway"/>
    <property type="evidence" value="ECO:0007669"/>
    <property type="project" value="Ensembl"/>
</dbReference>
<dbReference type="GO" id="GO:0031392">
    <property type="term" value="P:regulation of prostaglandin biosynthetic process"/>
    <property type="evidence" value="ECO:0007669"/>
    <property type="project" value="Ensembl"/>
</dbReference>
<dbReference type="GO" id="GO:0099178">
    <property type="term" value="P:regulation of retrograde trans-synaptic signaling by endocanabinoid"/>
    <property type="evidence" value="ECO:0000250"/>
    <property type="project" value="UniProtKB"/>
</dbReference>
<dbReference type="GO" id="GO:0051930">
    <property type="term" value="P:regulation of sensory perception of pain"/>
    <property type="evidence" value="ECO:0007669"/>
    <property type="project" value="Ensembl"/>
</dbReference>
<dbReference type="GO" id="GO:0098921">
    <property type="term" value="P:retrograde trans-synaptic signaling by endocannabinoid"/>
    <property type="evidence" value="ECO:0007669"/>
    <property type="project" value="Ensembl"/>
</dbReference>
<dbReference type="FunFam" id="2.40.128.20:FF:000001">
    <property type="entry name" value="Fatty acid-binding protein, adipocyte"/>
    <property type="match status" value="1"/>
</dbReference>
<dbReference type="Gene3D" id="2.40.128.20">
    <property type="match status" value="1"/>
</dbReference>
<dbReference type="InterPro" id="IPR012674">
    <property type="entry name" value="Calycin"/>
</dbReference>
<dbReference type="InterPro" id="IPR000463">
    <property type="entry name" value="Fatty_acid-bd"/>
</dbReference>
<dbReference type="InterPro" id="IPR031259">
    <property type="entry name" value="ILBP"/>
</dbReference>
<dbReference type="InterPro" id="IPR000566">
    <property type="entry name" value="Lipocln_cytosolic_FA-bd_dom"/>
</dbReference>
<dbReference type="PANTHER" id="PTHR11955">
    <property type="entry name" value="FATTY ACID BINDING PROTEIN"/>
    <property type="match status" value="1"/>
</dbReference>
<dbReference type="Pfam" id="PF00061">
    <property type="entry name" value="Lipocalin"/>
    <property type="match status" value="1"/>
</dbReference>
<dbReference type="PRINTS" id="PR00178">
    <property type="entry name" value="FATTYACIDBP"/>
</dbReference>
<dbReference type="SUPFAM" id="SSF50814">
    <property type="entry name" value="Lipocalins"/>
    <property type="match status" value="1"/>
</dbReference>
<dbReference type="PROSITE" id="PS00214">
    <property type="entry name" value="FABP"/>
    <property type="match status" value="1"/>
</dbReference>
<reference key="1">
    <citation type="journal article" date="1996" name="Biochem. J.">
        <title>LP2, a differentiation-associated lipid-binding protein expressed in bovine lens.</title>
        <authorList>
            <person name="Jaworski C."/>
            <person name="Wistow G."/>
        </authorList>
    </citation>
    <scope>NUCLEOTIDE SEQUENCE [MRNA]</scope>
    <scope>PROTEIN SEQUENCE OF 18-33 AND 116-129</scope>
    <source>
        <tissue>Lens</tissue>
    </source>
</reference>
<reference key="2">
    <citation type="journal article" date="1998" name="Biochemistry">
        <title>Bovine epidermal fatty acid-binding protein: determination of ligand specificity and cellular localization in retina and testis.</title>
        <authorList>
            <person name="Kingma P.B."/>
            <person name="Bok D."/>
            <person name="Ong D.E."/>
        </authorList>
    </citation>
    <scope>NUCLEOTIDE SEQUENCE [MRNA]</scope>
    <scope>PARTIAL PROTEIN SEQUENCE</scope>
    <scope>SUBCELLULAR LOCATION</scope>
    <scope>TISSUE SPECIFICITY</scope>
    <source>
        <tissue>Retina</tissue>
    </source>
</reference>
<reference key="3">
    <citation type="journal article" date="2005" name="BMC Genomics">
        <title>Characterization of 954 bovine full-CDS cDNA sequences.</title>
        <authorList>
            <person name="Harhay G.P."/>
            <person name="Sonstegard T.S."/>
            <person name="Keele J.W."/>
            <person name="Heaton M.P."/>
            <person name="Clawson M.L."/>
            <person name="Snelling W.M."/>
            <person name="Wiedmann R.T."/>
            <person name="Van Tassell C.P."/>
            <person name="Smith T.P.L."/>
        </authorList>
    </citation>
    <scope>NUCLEOTIDE SEQUENCE [LARGE SCALE MRNA]</scope>
</reference>
<reference key="4">
    <citation type="submission" date="2005-09" db="EMBL/GenBank/DDBJ databases">
        <authorList>
            <consortium name="NIH - Mammalian Gene Collection (MGC) project"/>
        </authorList>
    </citation>
    <scope>NUCLEOTIDE SEQUENCE [LARGE SCALE MRNA]</scope>
    <source>
        <strain>Hereford</strain>
        <tissue>Heart ventricle</tissue>
    </source>
</reference>
<name>FABP5_BOVIN</name>
<feature type="initiator methionine" description="Removed" evidence="2">
    <location>
        <position position="1"/>
    </location>
</feature>
<feature type="chain" id="PRO_0000067376" description="Fatty acid-binding protein 5">
    <location>
        <begin position="2"/>
        <end position="135"/>
    </location>
</feature>
<feature type="short sequence motif" description="Nuclear localization signal" evidence="2">
    <location>
        <begin position="24"/>
        <end position="34"/>
    </location>
</feature>
<feature type="binding site" evidence="2">
    <location>
        <position position="43"/>
    </location>
    <ligand>
        <name>N-eicosanoyl ethanolamine</name>
        <dbReference type="ChEBI" id="CHEBI:85253"/>
    </ligand>
</feature>
<feature type="binding site" evidence="2">
    <location>
        <position position="109"/>
    </location>
    <ligand>
        <name>N-eicosanoyl ethanolamine</name>
        <dbReference type="ChEBI" id="CHEBI:85253"/>
    </ligand>
</feature>
<feature type="binding site" evidence="2">
    <location>
        <begin position="129"/>
        <end position="131"/>
    </location>
    <ligand>
        <name>(9Z,12Z)-octadecadienoate</name>
        <dbReference type="ChEBI" id="CHEBI:30245"/>
    </ligand>
</feature>
<feature type="binding site" evidence="2">
    <location>
        <position position="131"/>
    </location>
    <ligand>
        <name>hexadecanoate</name>
        <dbReference type="ChEBI" id="CHEBI:7896"/>
    </ligand>
</feature>
<feature type="binding site" evidence="2">
    <location>
        <position position="131"/>
    </location>
    <ligand>
        <name>N-eicosanoyl ethanolamine</name>
        <dbReference type="ChEBI" id="CHEBI:85253"/>
    </ligand>
</feature>
<feature type="modified residue" description="N-acetylalanine" evidence="2">
    <location>
        <position position="2"/>
    </location>
</feature>
<feature type="modified residue" description="N6-acetyllysine" evidence="2">
    <location>
        <position position="17"/>
    </location>
</feature>
<feature type="modified residue" description="Phosphotyrosine; by Tyr-kinases" evidence="5">
    <location>
        <position position="22"/>
    </location>
</feature>
<feature type="modified residue" description="Phosphotyrosine" evidence="2">
    <location>
        <position position="131"/>
    </location>
</feature>
<feature type="disulfide bond" evidence="2">
    <location>
        <begin position="120"/>
        <end position="127"/>
    </location>
</feature>
<feature type="sequence conflict" description="In Ref. 1; AAB41297." evidence="5" ref="1">
    <original>L</original>
    <variation>P</variation>
    <location>
        <position position="52"/>
    </location>
</feature>
<keyword id="KW-0007">Acetylation</keyword>
<keyword id="KW-0963">Cytoplasm</keyword>
<keyword id="KW-0903">Direct protein sequencing</keyword>
<keyword id="KW-1015">Disulfide bond</keyword>
<keyword id="KW-0445">Lipid transport</keyword>
<keyword id="KW-0446">Lipid-binding</keyword>
<keyword id="KW-0539">Nucleus</keyword>
<keyword id="KW-0597">Phosphoprotein</keyword>
<keyword id="KW-1185">Reference proteome</keyword>
<keyword id="KW-0964">Secreted</keyword>
<keyword id="KW-0770">Synapse</keyword>
<keyword id="KW-0813">Transport</keyword>